<feature type="chain" id="PRO_1000138371" description="Probable succinate transporter subunit YjjB">
    <location>
        <begin position="1"/>
        <end position="157"/>
    </location>
</feature>
<feature type="transmembrane region" description="Helical" evidence="1">
    <location>
        <begin position="8"/>
        <end position="28"/>
    </location>
</feature>
<feature type="transmembrane region" description="Helical" evidence="1">
    <location>
        <begin position="55"/>
        <end position="75"/>
    </location>
</feature>
<feature type="transmembrane region" description="Helical" evidence="1">
    <location>
        <begin position="87"/>
        <end position="107"/>
    </location>
</feature>
<feature type="transmembrane region" description="Helical" evidence="1">
    <location>
        <begin position="129"/>
        <end position="149"/>
    </location>
</feature>
<name>YJJB_SALEP</name>
<comment type="function">
    <text evidence="1">Involved in succinate export with YjjP. Both proteins are required for export.</text>
</comment>
<comment type="subunit">
    <text evidence="1">The transporter is composed of YjjB and YjjP.</text>
</comment>
<comment type="subcellular location">
    <subcellularLocation>
        <location evidence="1">Cell inner membrane</location>
        <topology evidence="1">Multi-pass membrane protein</topology>
    </subcellularLocation>
</comment>
<comment type="similarity">
    <text evidence="1">Belongs to the ThrE exporter (TC 2.A.79) family.</text>
</comment>
<dbReference type="EMBL" id="AM933172">
    <property type="protein sequence ID" value="CAR35862.1"/>
    <property type="molecule type" value="Genomic_DNA"/>
</dbReference>
<dbReference type="RefSeq" id="WP_000511329.1">
    <property type="nucleotide sequence ID" value="NC_011294.1"/>
</dbReference>
<dbReference type="KEGG" id="set:SEN4310"/>
<dbReference type="HOGENOM" id="CLU_117642_1_0_6"/>
<dbReference type="Proteomes" id="UP000000613">
    <property type="component" value="Chromosome"/>
</dbReference>
<dbReference type="GO" id="GO:0005886">
    <property type="term" value="C:plasma membrane"/>
    <property type="evidence" value="ECO:0007669"/>
    <property type="project" value="UniProtKB-SubCell"/>
</dbReference>
<dbReference type="GO" id="GO:0015744">
    <property type="term" value="P:succinate transport"/>
    <property type="evidence" value="ECO:0007669"/>
    <property type="project" value="UniProtKB-UniRule"/>
</dbReference>
<dbReference type="HAMAP" id="MF_01191">
    <property type="entry name" value="YjjB"/>
    <property type="match status" value="1"/>
</dbReference>
<dbReference type="InterPro" id="IPR024528">
    <property type="entry name" value="ThrE_2"/>
</dbReference>
<dbReference type="InterPro" id="IPR050539">
    <property type="entry name" value="ThrE_Dicarb/AminoAcid_Exp"/>
</dbReference>
<dbReference type="InterPro" id="IPR020914">
    <property type="entry name" value="YjjB"/>
</dbReference>
<dbReference type="NCBIfam" id="NF007391">
    <property type="entry name" value="PRK09917.1"/>
    <property type="match status" value="1"/>
</dbReference>
<dbReference type="PANTHER" id="PTHR34390:SF1">
    <property type="entry name" value="SUCCINATE TRANSPORTER SUBUNIT YJJB-RELATED"/>
    <property type="match status" value="1"/>
</dbReference>
<dbReference type="PANTHER" id="PTHR34390">
    <property type="entry name" value="UPF0442 PROTEIN YJJB-RELATED"/>
    <property type="match status" value="1"/>
</dbReference>
<dbReference type="Pfam" id="PF12821">
    <property type="entry name" value="ThrE_2"/>
    <property type="match status" value="1"/>
</dbReference>
<protein>
    <recommendedName>
        <fullName evidence="1">Probable succinate transporter subunit YjjB</fullName>
    </recommendedName>
</protein>
<accession>B5R2H8</accession>
<gene>
    <name evidence="1" type="primary">yjjB</name>
    <name type="ordered locus">SEN4310</name>
</gene>
<proteinExistence type="inferred from homology"/>
<reference key="1">
    <citation type="journal article" date="2008" name="Genome Res.">
        <title>Comparative genome analysis of Salmonella enteritidis PT4 and Salmonella gallinarum 287/91 provides insights into evolutionary and host adaptation pathways.</title>
        <authorList>
            <person name="Thomson N.R."/>
            <person name="Clayton D.J."/>
            <person name="Windhorst D."/>
            <person name="Vernikos G."/>
            <person name="Davidson S."/>
            <person name="Churcher C."/>
            <person name="Quail M.A."/>
            <person name="Stevens M."/>
            <person name="Jones M.A."/>
            <person name="Watson M."/>
            <person name="Barron A."/>
            <person name="Layton A."/>
            <person name="Pickard D."/>
            <person name="Kingsley R.A."/>
            <person name="Bignell A."/>
            <person name="Clark L."/>
            <person name="Harris B."/>
            <person name="Ormond D."/>
            <person name="Abdellah Z."/>
            <person name="Brooks K."/>
            <person name="Cherevach I."/>
            <person name="Chillingworth T."/>
            <person name="Woodward J."/>
            <person name="Norberczak H."/>
            <person name="Lord A."/>
            <person name="Arrowsmith C."/>
            <person name="Jagels K."/>
            <person name="Moule S."/>
            <person name="Mungall K."/>
            <person name="Saunders M."/>
            <person name="Whitehead S."/>
            <person name="Chabalgoity J.A."/>
            <person name="Maskell D."/>
            <person name="Humphreys T."/>
            <person name="Roberts M."/>
            <person name="Barrow P.A."/>
            <person name="Dougan G."/>
            <person name="Parkhill J."/>
        </authorList>
    </citation>
    <scope>NUCLEOTIDE SEQUENCE [LARGE SCALE GENOMIC DNA]</scope>
    <source>
        <strain>P125109</strain>
    </source>
</reference>
<organism>
    <name type="scientific">Salmonella enteritidis PT4 (strain P125109)</name>
    <dbReference type="NCBI Taxonomy" id="550537"/>
    <lineage>
        <taxon>Bacteria</taxon>
        <taxon>Pseudomonadati</taxon>
        <taxon>Pseudomonadota</taxon>
        <taxon>Gammaproteobacteria</taxon>
        <taxon>Enterobacterales</taxon>
        <taxon>Enterobacteriaceae</taxon>
        <taxon>Salmonella</taxon>
    </lineage>
</organism>
<keyword id="KW-0997">Cell inner membrane</keyword>
<keyword id="KW-1003">Cell membrane</keyword>
<keyword id="KW-0472">Membrane</keyword>
<keyword id="KW-0812">Transmembrane</keyword>
<keyword id="KW-1133">Transmembrane helix</keyword>
<keyword id="KW-0813">Transport</keyword>
<evidence type="ECO:0000255" key="1">
    <source>
        <dbReference type="HAMAP-Rule" id="MF_01191"/>
    </source>
</evidence>
<sequence>MGIIDFLLALMQDMILSAIPAVGFAMVFNVPHRALPWCALLGALGHGSRMLMMSAGFNIEWSTFMASLLVGSIGIQWSRWYLAHPKVFTVAAVIPMFPGISAYTAMISAVKISHLGYSEPMMITLLTNFLKASSIVGALSIGLSVPGLWLYRKRPRV</sequence>